<sequence length="108" mass="12650">MMDWKEAEELACKFLKKKGYKILERNYRTKYGEIDIVARDGREIVFVEVKSGSGKVDPLERIDLKKVRNLEQTARFYMIQNKLKGPARVDFVRVTPEGIDHFEGIWLG</sequence>
<name>Y671_THEP1</name>
<feature type="chain" id="PRO_1000009273" description="UPF0102 protein Tpet_0671">
    <location>
        <begin position="1"/>
        <end position="108"/>
    </location>
</feature>
<gene>
    <name type="ordered locus">Tpet_0671</name>
</gene>
<protein>
    <recommendedName>
        <fullName evidence="1">UPF0102 protein Tpet_0671</fullName>
    </recommendedName>
</protein>
<reference key="1">
    <citation type="submission" date="2007-05" db="EMBL/GenBank/DDBJ databases">
        <title>Complete sequence of Thermotoga petrophila RKU-1.</title>
        <authorList>
            <consortium name="US DOE Joint Genome Institute"/>
            <person name="Copeland A."/>
            <person name="Lucas S."/>
            <person name="Lapidus A."/>
            <person name="Barry K."/>
            <person name="Glavina del Rio T."/>
            <person name="Dalin E."/>
            <person name="Tice H."/>
            <person name="Pitluck S."/>
            <person name="Sims D."/>
            <person name="Brettin T."/>
            <person name="Bruce D."/>
            <person name="Detter J.C."/>
            <person name="Han C."/>
            <person name="Tapia R."/>
            <person name="Schmutz J."/>
            <person name="Larimer F."/>
            <person name="Land M."/>
            <person name="Hauser L."/>
            <person name="Kyrpides N."/>
            <person name="Mikhailova N."/>
            <person name="Nelson K."/>
            <person name="Gogarten J.P."/>
            <person name="Noll K."/>
            <person name="Richardson P."/>
        </authorList>
    </citation>
    <scope>NUCLEOTIDE SEQUENCE [LARGE SCALE GENOMIC DNA]</scope>
    <source>
        <strain>ATCC BAA-488 / DSM 13995 / JCM 10881 / RKU-1</strain>
    </source>
</reference>
<proteinExistence type="inferred from homology"/>
<dbReference type="EMBL" id="CP000702">
    <property type="protein sequence ID" value="ABQ46691.1"/>
    <property type="molecule type" value="Genomic_DNA"/>
</dbReference>
<dbReference type="RefSeq" id="WP_004082957.1">
    <property type="nucleotide sequence ID" value="NC_009486.1"/>
</dbReference>
<dbReference type="SMR" id="A5IKG8"/>
<dbReference type="STRING" id="390874.Tpet_0671"/>
<dbReference type="KEGG" id="tpt:Tpet_0671"/>
<dbReference type="eggNOG" id="COG0792">
    <property type="taxonomic scope" value="Bacteria"/>
</dbReference>
<dbReference type="HOGENOM" id="CLU_115353_3_1_0"/>
<dbReference type="Proteomes" id="UP000006558">
    <property type="component" value="Chromosome"/>
</dbReference>
<dbReference type="GO" id="GO:0003676">
    <property type="term" value="F:nucleic acid binding"/>
    <property type="evidence" value="ECO:0007669"/>
    <property type="project" value="InterPro"/>
</dbReference>
<dbReference type="CDD" id="cd20736">
    <property type="entry name" value="PoNe_Nuclease"/>
    <property type="match status" value="1"/>
</dbReference>
<dbReference type="Gene3D" id="3.40.1350.10">
    <property type="match status" value="1"/>
</dbReference>
<dbReference type="HAMAP" id="MF_00048">
    <property type="entry name" value="UPF0102"/>
    <property type="match status" value="1"/>
</dbReference>
<dbReference type="InterPro" id="IPR011335">
    <property type="entry name" value="Restrct_endonuc-II-like"/>
</dbReference>
<dbReference type="InterPro" id="IPR011856">
    <property type="entry name" value="tRNA_endonuc-like_dom_sf"/>
</dbReference>
<dbReference type="InterPro" id="IPR003509">
    <property type="entry name" value="UPF0102_YraN-like"/>
</dbReference>
<dbReference type="NCBIfam" id="NF011270">
    <property type="entry name" value="PRK14677.1"/>
    <property type="match status" value="1"/>
</dbReference>
<dbReference type="PANTHER" id="PTHR34039">
    <property type="entry name" value="UPF0102 PROTEIN YRAN"/>
    <property type="match status" value="1"/>
</dbReference>
<dbReference type="PANTHER" id="PTHR34039:SF1">
    <property type="entry name" value="UPF0102 PROTEIN YRAN"/>
    <property type="match status" value="1"/>
</dbReference>
<dbReference type="Pfam" id="PF02021">
    <property type="entry name" value="UPF0102"/>
    <property type="match status" value="1"/>
</dbReference>
<dbReference type="SUPFAM" id="SSF52980">
    <property type="entry name" value="Restriction endonuclease-like"/>
    <property type="match status" value="1"/>
</dbReference>
<accession>A5IKG8</accession>
<evidence type="ECO:0000255" key="1">
    <source>
        <dbReference type="HAMAP-Rule" id="MF_00048"/>
    </source>
</evidence>
<organism>
    <name type="scientific">Thermotoga petrophila (strain ATCC BAA-488 / DSM 13995 / JCM 10881 / RKU-1)</name>
    <dbReference type="NCBI Taxonomy" id="390874"/>
    <lineage>
        <taxon>Bacteria</taxon>
        <taxon>Thermotogati</taxon>
        <taxon>Thermotogota</taxon>
        <taxon>Thermotogae</taxon>
        <taxon>Thermotogales</taxon>
        <taxon>Thermotogaceae</taxon>
        <taxon>Thermotoga</taxon>
    </lineage>
</organism>
<comment type="similarity">
    <text evidence="1">Belongs to the UPF0102 family.</text>
</comment>